<sequence length="124" mass="13765">MATVNQLVRKPRARKVAKSNVPALEACPQKRGVCTRVYTTTPRKPNSALRKVCRVRLTNGFEVTSYIGGEGHNLQEHSVILIRGGRVKDLPGVRYHTVRGALDCSGVKDRKQARSKYGVKRPKA</sequence>
<comment type="function">
    <text evidence="2">With S4 and S5 plays an important role in translational accuracy.</text>
</comment>
<comment type="function">
    <text evidence="2">Interacts with and stabilizes bases of the 16S rRNA that are involved in tRNA selection in the A site and with the mRNA backbone. Located at the interface of the 30S and 50S subunits, it traverses the body of the 30S subunit contacting proteins on the other side and probably holding the rRNA structure together. The combined cluster of proteins S8, S12 and S17 appears to hold together the shoulder and platform of the 30S subunit.</text>
</comment>
<comment type="subunit">
    <text evidence="2">Part of the 30S ribosomal subunit. Contacts proteins S8 and S17. May interact with IF1 in the 30S initiation complex.</text>
</comment>
<comment type="similarity">
    <text evidence="2">Belongs to the universal ribosomal protein uS12 family.</text>
</comment>
<gene>
    <name evidence="2" type="primary">rpsL</name>
    <name type="ordered locus">BWG_3033</name>
</gene>
<evidence type="ECO:0000250" key="1"/>
<evidence type="ECO:0000255" key="2">
    <source>
        <dbReference type="HAMAP-Rule" id="MF_00403"/>
    </source>
</evidence>
<evidence type="ECO:0000305" key="3"/>
<protein>
    <recommendedName>
        <fullName evidence="2">Small ribosomal subunit protein uS12</fullName>
    </recommendedName>
    <alternativeName>
        <fullName evidence="3">30S ribosomal protein S12</fullName>
    </alternativeName>
</protein>
<dbReference type="EMBL" id="CP001396">
    <property type="protein sequence ID" value="ACR61784.1"/>
    <property type="molecule type" value="Genomic_DNA"/>
</dbReference>
<dbReference type="RefSeq" id="WP_001319024.1">
    <property type="nucleotide sequence ID" value="NC_012759.1"/>
</dbReference>
<dbReference type="SMR" id="C4ZUJ7"/>
<dbReference type="KEGG" id="ebw:BWG_3033"/>
<dbReference type="HOGENOM" id="CLU_104295_1_2_6"/>
<dbReference type="GO" id="GO:0015935">
    <property type="term" value="C:small ribosomal subunit"/>
    <property type="evidence" value="ECO:0007669"/>
    <property type="project" value="InterPro"/>
</dbReference>
<dbReference type="GO" id="GO:0019843">
    <property type="term" value="F:rRNA binding"/>
    <property type="evidence" value="ECO:0007669"/>
    <property type="project" value="UniProtKB-UniRule"/>
</dbReference>
<dbReference type="GO" id="GO:0003735">
    <property type="term" value="F:structural constituent of ribosome"/>
    <property type="evidence" value="ECO:0007669"/>
    <property type="project" value="InterPro"/>
</dbReference>
<dbReference type="GO" id="GO:0000049">
    <property type="term" value="F:tRNA binding"/>
    <property type="evidence" value="ECO:0007669"/>
    <property type="project" value="UniProtKB-UniRule"/>
</dbReference>
<dbReference type="GO" id="GO:0006412">
    <property type="term" value="P:translation"/>
    <property type="evidence" value="ECO:0007669"/>
    <property type="project" value="UniProtKB-UniRule"/>
</dbReference>
<dbReference type="CDD" id="cd03368">
    <property type="entry name" value="Ribosomal_S12"/>
    <property type="match status" value="1"/>
</dbReference>
<dbReference type="FunFam" id="2.40.50.140:FF:000001">
    <property type="entry name" value="30S ribosomal protein S12"/>
    <property type="match status" value="1"/>
</dbReference>
<dbReference type="Gene3D" id="2.40.50.140">
    <property type="entry name" value="Nucleic acid-binding proteins"/>
    <property type="match status" value="1"/>
</dbReference>
<dbReference type="HAMAP" id="MF_00403_B">
    <property type="entry name" value="Ribosomal_uS12_B"/>
    <property type="match status" value="1"/>
</dbReference>
<dbReference type="InterPro" id="IPR012340">
    <property type="entry name" value="NA-bd_OB-fold"/>
</dbReference>
<dbReference type="InterPro" id="IPR006032">
    <property type="entry name" value="Ribosomal_uS12"/>
</dbReference>
<dbReference type="InterPro" id="IPR005679">
    <property type="entry name" value="Ribosomal_uS12_bac"/>
</dbReference>
<dbReference type="NCBIfam" id="TIGR00981">
    <property type="entry name" value="rpsL_bact"/>
    <property type="match status" value="1"/>
</dbReference>
<dbReference type="PANTHER" id="PTHR11652">
    <property type="entry name" value="30S RIBOSOMAL PROTEIN S12 FAMILY MEMBER"/>
    <property type="match status" value="1"/>
</dbReference>
<dbReference type="Pfam" id="PF00164">
    <property type="entry name" value="Ribosom_S12_S23"/>
    <property type="match status" value="1"/>
</dbReference>
<dbReference type="PIRSF" id="PIRSF002133">
    <property type="entry name" value="Ribosomal_S12/S23"/>
    <property type="match status" value="1"/>
</dbReference>
<dbReference type="PRINTS" id="PR01034">
    <property type="entry name" value="RIBOSOMALS12"/>
</dbReference>
<dbReference type="SUPFAM" id="SSF50249">
    <property type="entry name" value="Nucleic acid-binding proteins"/>
    <property type="match status" value="1"/>
</dbReference>
<dbReference type="PROSITE" id="PS00055">
    <property type="entry name" value="RIBOSOMAL_S12"/>
    <property type="match status" value="1"/>
</dbReference>
<proteinExistence type="inferred from homology"/>
<reference key="1">
    <citation type="journal article" date="2009" name="J. Bacteriol.">
        <title>Genomic sequencing reveals regulatory mutations and recombinational events in the widely used MC4100 lineage of Escherichia coli K-12.</title>
        <authorList>
            <person name="Ferenci T."/>
            <person name="Zhou Z."/>
            <person name="Betteridge T."/>
            <person name="Ren Y."/>
            <person name="Liu Y."/>
            <person name="Feng L."/>
            <person name="Reeves P.R."/>
            <person name="Wang L."/>
        </authorList>
    </citation>
    <scope>NUCLEOTIDE SEQUENCE [LARGE SCALE GENOMIC DNA]</scope>
    <source>
        <strain>K12 / MC4100 / BW2952</strain>
    </source>
</reference>
<accession>C4ZUJ7</accession>
<organism>
    <name type="scientific">Escherichia coli (strain K12 / MC4100 / BW2952)</name>
    <dbReference type="NCBI Taxonomy" id="595496"/>
    <lineage>
        <taxon>Bacteria</taxon>
        <taxon>Pseudomonadati</taxon>
        <taxon>Pseudomonadota</taxon>
        <taxon>Gammaproteobacteria</taxon>
        <taxon>Enterobacterales</taxon>
        <taxon>Enterobacteriaceae</taxon>
        <taxon>Escherichia</taxon>
    </lineage>
</organism>
<keyword id="KW-0007">Acetylation</keyword>
<keyword id="KW-0488">Methylation</keyword>
<keyword id="KW-0687">Ribonucleoprotein</keyword>
<keyword id="KW-0689">Ribosomal protein</keyword>
<keyword id="KW-0694">RNA-binding</keyword>
<keyword id="KW-0699">rRNA-binding</keyword>
<keyword id="KW-0820">tRNA-binding</keyword>
<name>RS12_ECOBW</name>
<feature type="chain" id="PRO_1000205912" description="Small ribosomal subunit protein uS12">
    <location>
        <begin position="1"/>
        <end position="124"/>
    </location>
</feature>
<feature type="modified residue" description="3-methylthioaspartic acid" evidence="1">
    <location>
        <position position="89"/>
    </location>
</feature>
<feature type="modified residue" description="N6-acetyllysine" evidence="2">
    <location>
        <position position="108"/>
    </location>
</feature>